<comment type="function">
    <text evidence="1">Prevents the cell division inhibition by proteins MinC and MinD at internal division sites while permitting inhibition at polar sites. This ensures cell division at the proper site by restricting the formation of a division septum at the midpoint of the long axis of the cell.</text>
</comment>
<comment type="similarity">
    <text evidence="1">Belongs to the MinE family.</text>
</comment>
<protein>
    <recommendedName>
        <fullName evidence="1">Cell division topological specificity factor</fullName>
    </recommendedName>
</protein>
<organism>
    <name type="scientific">Shewanella oneidensis (strain ATCC 700550 / JCM 31522 / CIP 106686 / LMG 19005 / NCIMB 14063 / MR-1)</name>
    <dbReference type="NCBI Taxonomy" id="211586"/>
    <lineage>
        <taxon>Bacteria</taxon>
        <taxon>Pseudomonadati</taxon>
        <taxon>Pseudomonadota</taxon>
        <taxon>Gammaproteobacteria</taxon>
        <taxon>Alteromonadales</taxon>
        <taxon>Shewanellaceae</taxon>
        <taxon>Shewanella</taxon>
    </lineage>
</organism>
<feature type="chain" id="PRO_0000298184" description="Cell division topological specificity factor">
    <location>
        <begin position="1"/>
        <end position="85"/>
    </location>
</feature>
<accession>Q8EE12</accession>
<evidence type="ECO:0000255" key="1">
    <source>
        <dbReference type="HAMAP-Rule" id="MF_00262"/>
    </source>
</evidence>
<reference key="1">
    <citation type="journal article" date="2002" name="Nat. Biotechnol.">
        <title>Genome sequence of the dissimilatory metal ion-reducing bacterium Shewanella oneidensis.</title>
        <authorList>
            <person name="Heidelberg J.F."/>
            <person name="Paulsen I.T."/>
            <person name="Nelson K.E."/>
            <person name="Gaidos E.J."/>
            <person name="Nelson W.C."/>
            <person name="Read T.D."/>
            <person name="Eisen J.A."/>
            <person name="Seshadri R."/>
            <person name="Ward N.L."/>
            <person name="Methe B.A."/>
            <person name="Clayton R.A."/>
            <person name="Meyer T."/>
            <person name="Tsapin A."/>
            <person name="Scott J."/>
            <person name="Beanan M.J."/>
            <person name="Brinkac L.M."/>
            <person name="Daugherty S.C."/>
            <person name="DeBoy R.T."/>
            <person name="Dodson R.J."/>
            <person name="Durkin A.S."/>
            <person name="Haft D.H."/>
            <person name="Kolonay J.F."/>
            <person name="Madupu R."/>
            <person name="Peterson J.D."/>
            <person name="Umayam L.A."/>
            <person name="White O."/>
            <person name="Wolf A.M."/>
            <person name="Vamathevan J.J."/>
            <person name="Weidman J.F."/>
            <person name="Impraim M."/>
            <person name="Lee K."/>
            <person name="Berry K.J."/>
            <person name="Lee C."/>
            <person name="Mueller J."/>
            <person name="Khouri H.M."/>
            <person name="Gill J."/>
            <person name="Utterback T.R."/>
            <person name="McDonald L.A."/>
            <person name="Feldblyum T.V."/>
            <person name="Smith H.O."/>
            <person name="Venter J.C."/>
            <person name="Nealson K.H."/>
            <person name="Fraser C.M."/>
        </authorList>
    </citation>
    <scope>NUCLEOTIDE SEQUENCE [LARGE SCALE GENOMIC DNA]</scope>
    <source>
        <strain>ATCC 700550 / JCM 31522 / CIP 106686 / LMG 19005 / NCIMB 14063 / MR-1</strain>
    </source>
</reference>
<keyword id="KW-0131">Cell cycle</keyword>
<keyword id="KW-0132">Cell division</keyword>
<keyword id="KW-1185">Reference proteome</keyword>
<gene>
    <name evidence="1" type="primary">minE</name>
    <name type="ordered locus">SO_2578</name>
</gene>
<sequence>MSLLDYFKSKKKPSTAVMAKERLQIIVAHQRGQRDTPDYFPQMKQEIIAVIRKYVQISDDQVSVQLDQNDDNLSVLELNVTLPDR</sequence>
<name>MINE_SHEON</name>
<proteinExistence type="inferred from homology"/>
<dbReference type="EMBL" id="AE014299">
    <property type="protein sequence ID" value="AAN55608.1"/>
    <property type="molecule type" value="Genomic_DNA"/>
</dbReference>
<dbReference type="RefSeq" id="NP_718164.1">
    <property type="nucleotide sequence ID" value="NC_004347.2"/>
</dbReference>
<dbReference type="RefSeq" id="WP_007648439.1">
    <property type="nucleotide sequence ID" value="NZ_CP053946.1"/>
</dbReference>
<dbReference type="SMR" id="Q8EE12"/>
<dbReference type="STRING" id="211586.SO_2578"/>
<dbReference type="PaxDb" id="211586-SO_2578"/>
<dbReference type="GeneID" id="75188944"/>
<dbReference type="KEGG" id="son:SO_2578"/>
<dbReference type="PATRIC" id="fig|211586.12.peg.2482"/>
<dbReference type="eggNOG" id="COG0851">
    <property type="taxonomic scope" value="Bacteria"/>
</dbReference>
<dbReference type="HOGENOM" id="CLU_137929_2_2_6"/>
<dbReference type="OrthoDB" id="9802655at2"/>
<dbReference type="PhylomeDB" id="Q8EE12"/>
<dbReference type="BioCyc" id="SONE211586:G1GMP-2363-MONOMER"/>
<dbReference type="Proteomes" id="UP000008186">
    <property type="component" value="Chromosome"/>
</dbReference>
<dbReference type="GO" id="GO:0005886">
    <property type="term" value="C:plasma membrane"/>
    <property type="evidence" value="ECO:0000318"/>
    <property type="project" value="GO_Central"/>
</dbReference>
<dbReference type="GO" id="GO:0000918">
    <property type="term" value="P:division septum site selection"/>
    <property type="evidence" value="ECO:0000318"/>
    <property type="project" value="GO_Central"/>
</dbReference>
<dbReference type="GO" id="GO:0032955">
    <property type="term" value="P:regulation of division septum assembly"/>
    <property type="evidence" value="ECO:0007669"/>
    <property type="project" value="InterPro"/>
</dbReference>
<dbReference type="FunFam" id="3.30.1070.10:FF:000001">
    <property type="entry name" value="Cell division topological specificity factor"/>
    <property type="match status" value="1"/>
</dbReference>
<dbReference type="Gene3D" id="3.30.1070.10">
    <property type="entry name" value="Cell division topological specificity factor MinE"/>
    <property type="match status" value="1"/>
</dbReference>
<dbReference type="HAMAP" id="MF_00262">
    <property type="entry name" value="MinE"/>
    <property type="match status" value="1"/>
</dbReference>
<dbReference type="InterPro" id="IPR005527">
    <property type="entry name" value="MinE"/>
</dbReference>
<dbReference type="InterPro" id="IPR036707">
    <property type="entry name" value="MinE_sf"/>
</dbReference>
<dbReference type="NCBIfam" id="TIGR01215">
    <property type="entry name" value="minE"/>
    <property type="match status" value="1"/>
</dbReference>
<dbReference type="NCBIfam" id="NF001422">
    <property type="entry name" value="PRK00296.1"/>
    <property type="match status" value="1"/>
</dbReference>
<dbReference type="Pfam" id="PF03776">
    <property type="entry name" value="MinE"/>
    <property type="match status" value="1"/>
</dbReference>
<dbReference type="SUPFAM" id="SSF55229">
    <property type="entry name" value="Cell division protein MinE topological specificity domain"/>
    <property type="match status" value="1"/>
</dbReference>